<comment type="function">
    <text evidence="1">Formation of pseudouridine at positions 38, 39 and 40 in the anticodon stem and loop of transfer RNAs.</text>
</comment>
<comment type="catalytic activity">
    <reaction evidence="1">
        <text>uridine(38/39/40) in tRNA = pseudouridine(38/39/40) in tRNA</text>
        <dbReference type="Rhea" id="RHEA:22376"/>
        <dbReference type="Rhea" id="RHEA-COMP:10085"/>
        <dbReference type="Rhea" id="RHEA-COMP:10087"/>
        <dbReference type="ChEBI" id="CHEBI:65314"/>
        <dbReference type="ChEBI" id="CHEBI:65315"/>
        <dbReference type="EC" id="5.4.99.12"/>
    </reaction>
</comment>
<comment type="subunit">
    <text evidence="1">Homodimer.</text>
</comment>
<comment type="similarity">
    <text evidence="1">Belongs to the tRNA pseudouridine synthase TruA family.</text>
</comment>
<proteinExistence type="inferred from homology"/>
<organism>
    <name type="scientific">Legionella pneumophila (strain Lens)</name>
    <dbReference type="NCBI Taxonomy" id="297245"/>
    <lineage>
        <taxon>Bacteria</taxon>
        <taxon>Pseudomonadati</taxon>
        <taxon>Pseudomonadota</taxon>
        <taxon>Gammaproteobacteria</taxon>
        <taxon>Legionellales</taxon>
        <taxon>Legionellaceae</taxon>
        <taxon>Legionella</taxon>
    </lineage>
</organism>
<sequence>MRIALVVEYDGSQYHGWQAQTGLHTIQQAVEFALSKVADSSISVVCAGRTDTGVHATNQVIHFDCEKDRSIRAWIHGANSFLPKDICVKWGKEMPENFHARYSAVSRRYRYVIYNGAIRPGLLRGNVTWQYRQLDHRLMQQGGQCLLGENDFTSFRSVECQSNTPMRNIHQLQVTRHGDLVVLDITANAFLHHMVRNIAGVLIAVGSGKHPVGWVKDVLNAKDRKLGAETAPSYGLYLVQVTYPKEFGLLQNNPGPLFLWEK</sequence>
<evidence type="ECO:0000255" key="1">
    <source>
        <dbReference type="HAMAP-Rule" id="MF_00171"/>
    </source>
</evidence>
<feature type="chain" id="PRO_0000057399" description="tRNA pseudouridine synthase A">
    <location>
        <begin position="1"/>
        <end position="262"/>
    </location>
</feature>
<feature type="active site" description="Nucleophile" evidence="1">
    <location>
        <position position="51"/>
    </location>
</feature>
<feature type="binding site" evidence="1">
    <location>
        <position position="109"/>
    </location>
    <ligand>
        <name>substrate</name>
    </ligand>
</feature>
<dbReference type="EC" id="5.4.99.12" evidence="1"/>
<dbReference type="EMBL" id="CR628337">
    <property type="protein sequence ID" value="CAH15505.1"/>
    <property type="molecule type" value="Genomic_DNA"/>
</dbReference>
<dbReference type="RefSeq" id="WP_011215345.1">
    <property type="nucleotide sequence ID" value="NC_006369.1"/>
</dbReference>
<dbReference type="SMR" id="Q5WX34"/>
<dbReference type="KEGG" id="lpf:lpl1265"/>
<dbReference type="LegioList" id="lpl1265"/>
<dbReference type="HOGENOM" id="CLU_014673_0_2_6"/>
<dbReference type="Proteomes" id="UP000002517">
    <property type="component" value="Chromosome"/>
</dbReference>
<dbReference type="GO" id="GO:0003723">
    <property type="term" value="F:RNA binding"/>
    <property type="evidence" value="ECO:0007669"/>
    <property type="project" value="InterPro"/>
</dbReference>
<dbReference type="GO" id="GO:0160147">
    <property type="term" value="F:tRNA pseudouridine(38-40) synthase activity"/>
    <property type="evidence" value="ECO:0007669"/>
    <property type="project" value="UniProtKB-EC"/>
</dbReference>
<dbReference type="GO" id="GO:0031119">
    <property type="term" value="P:tRNA pseudouridine synthesis"/>
    <property type="evidence" value="ECO:0007669"/>
    <property type="project" value="UniProtKB-UniRule"/>
</dbReference>
<dbReference type="CDD" id="cd02570">
    <property type="entry name" value="PseudoU_synth_EcTruA"/>
    <property type="match status" value="1"/>
</dbReference>
<dbReference type="FunFam" id="3.30.70.580:FF:000001">
    <property type="entry name" value="tRNA pseudouridine synthase A"/>
    <property type="match status" value="1"/>
</dbReference>
<dbReference type="Gene3D" id="3.30.70.660">
    <property type="entry name" value="Pseudouridine synthase I, catalytic domain, C-terminal subdomain"/>
    <property type="match status" value="1"/>
</dbReference>
<dbReference type="Gene3D" id="3.30.70.580">
    <property type="entry name" value="Pseudouridine synthase I, catalytic domain, N-terminal subdomain"/>
    <property type="match status" value="1"/>
</dbReference>
<dbReference type="HAMAP" id="MF_00171">
    <property type="entry name" value="TruA"/>
    <property type="match status" value="1"/>
</dbReference>
<dbReference type="InterPro" id="IPR020103">
    <property type="entry name" value="PsdUridine_synth_cat_dom_sf"/>
</dbReference>
<dbReference type="InterPro" id="IPR001406">
    <property type="entry name" value="PsdUridine_synth_TruA"/>
</dbReference>
<dbReference type="InterPro" id="IPR020097">
    <property type="entry name" value="PsdUridine_synth_TruA_a/b_dom"/>
</dbReference>
<dbReference type="InterPro" id="IPR020095">
    <property type="entry name" value="PsdUridine_synth_TruA_C"/>
</dbReference>
<dbReference type="InterPro" id="IPR020094">
    <property type="entry name" value="TruA/RsuA/RluB/E/F_N"/>
</dbReference>
<dbReference type="NCBIfam" id="TIGR00071">
    <property type="entry name" value="hisT_truA"/>
    <property type="match status" value="1"/>
</dbReference>
<dbReference type="PANTHER" id="PTHR11142">
    <property type="entry name" value="PSEUDOURIDYLATE SYNTHASE"/>
    <property type="match status" value="1"/>
</dbReference>
<dbReference type="PANTHER" id="PTHR11142:SF0">
    <property type="entry name" value="TRNA PSEUDOURIDINE SYNTHASE-LIKE 1"/>
    <property type="match status" value="1"/>
</dbReference>
<dbReference type="Pfam" id="PF01416">
    <property type="entry name" value="PseudoU_synth_1"/>
    <property type="match status" value="2"/>
</dbReference>
<dbReference type="PIRSF" id="PIRSF001430">
    <property type="entry name" value="tRNA_psdUrid_synth"/>
    <property type="match status" value="1"/>
</dbReference>
<dbReference type="SUPFAM" id="SSF55120">
    <property type="entry name" value="Pseudouridine synthase"/>
    <property type="match status" value="1"/>
</dbReference>
<gene>
    <name evidence="1" type="primary">truA</name>
    <name type="ordered locus">lpl1265</name>
</gene>
<protein>
    <recommendedName>
        <fullName evidence="1">tRNA pseudouridine synthase A</fullName>
        <ecNumber evidence="1">5.4.99.12</ecNumber>
    </recommendedName>
    <alternativeName>
        <fullName evidence="1">tRNA pseudouridine(38-40) synthase</fullName>
    </alternativeName>
    <alternativeName>
        <fullName evidence="1">tRNA pseudouridylate synthase I</fullName>
    </alternativeName>
    <alternativeName>
        <fullName evidence="1">tRNA-uridine isomerase I</fullName>
    </alternativeName>
</protein>
<reference key="1">
    <citation type="journal article" date="2004" name="Nat. Genet.">
        <title>Evidence in the Legionella pneumophila genome for exploitation of host cell functions and high genome plasticity.</title>
        <authorList>
            <person name="Cazalet C."/>
            <person name="Rusniok C."/>
            <person name="Brueggemann H."/>
            <person name="Zidane N."/>
            <person name="Magnier A."/>
            <person name="Ma L."/>
            <person name="Tichit M."/>
            <person name="Jarraud S."/>
            <person name="Bouchier C."/>
            <person name="Vandenesch F."/>
            <person name="Kunst F."/>
            <person name="Etienne J."/>
            <person name="Glaser P."/>
            <person name="Buchrieser C."/>
        </authorList>
    </citation>
    <scope>NUCLEOTIDE SEQUENCE [LARGE SCALE GENOMIC DNA]</scope>
    <source>
        <strain>Lens</strain>
    </source>
</reference>
<name>TRUA_LEGPL</name>
<keyword id="KW-0413">Isomerase</keyword>
<keyword id="KW-0819">tRNA processing</keyword>
<accession>Q5WX34</accession>